<organism>
    <name type="scientific">Homo sapiens</name>
    <name type="common">Human</name>
    <dbReference type="NCBI Taxonomy" id="9606"/>
    <lineage>
        <taxon>Eukaryota</taxon>
        <taxon>Metazoa</taxon>
        <taxon>Chordata</taxon>
        <taxon>Craniata</taxon>
        <taxon>Vertebrata</taxon>
        <taxon>Euteleostomi</taxon>
        <taxon>Mammalia</taxon>
        <taxon>Eutheria</taxon>
        <taxon>Euarchontoglires</taxon>
        <taxon>Primates</taxon>
        <taxon>Haplorrhini</taxon>
        <taxon>Catarrhini</taxon>
        <taxon>Hominidae</taxon>
        <taxon>Homo</taxon>
    </lineage>
</organism>
<comment type="similarity">
    <text evidence="2">Belongs to the UPF0607 family.</text>
</comment>
<feature type="chain" id="PRO_0000349373" description="Putative UPF0607 protein ENSP00000381514">
    <location>
        <begin position="1"/>
        <end position="341"/>
    </location>
</feature>
<feature type="region of interest" description="Disordered" evidence="1">
    <location>
        <begin position="78"/>
        <end position="131"/>
    </location>
</feature>
<feature type="region of interest" description="Disordered" evidence="1">
    <location>
        <begin position="216"/>
        <end position="282"/>
    </location>
</feature>
<feature type="compositionally biased region" description="Basic and acidic residues" evidence="1">
    <location>
        <begin position="78"/>
        <end position="89"/>
    </location>
</feature>
<feature type="compositionally biased region" description="Polar residues" evidence="1">
    <location>
        <begin position="108"/>
        <end position="127"/>
    </location>
</feature>
<feature type="compositionally biased region" description="Basic residues" evidence="1">
    <location>
        <begin position="243"/>
        <end position="252"/>
    </location>
</feature>
<sequence length="341" mass="37841">MRLCLIPWNTGTPQRVLPPVVWSPPSRKKPVLSARNSRMFGYLSPVRIPRLRGKFNLQLPSLDEQVIPARLPKMEVRAEEPKEATEVKDQVQTQEQEDNKRGPCSNGEAASTSRPLETQGNLTSSWYNPRPLEGNVHLKSLTENNQTDKAQVHAVSFYSKGHGVASSHSPAGGILPFGKPDPLPTVLPAPVPGCSLWPEKAALKVLGKDHLPSSPGLLTVGEDMQPKDPAALGSSRSSPPRAAGHRSRKRKLSGPPLQLQPTPPLQLRWERDERPPPAKLPCLSPEALLVGQASQREGRLQQGNMRKNMRVLSRTSKFRRLRQLLRRRKKRQQVRSISACT</sequence>
<proteinExistence type="inferred from homology"/>
<reference key="1">
    <citation type="journal article" date="2005" name="Nature">
        <title>Generation and annotation of the DNA sequences of human chromosomes 2 and 4.</title>
        <authorList>
            <person name="Hillier L.W."/>
            <person name="Graves T.A."/>
            <person name="Fulton R.S."/>
            <person name="Fulton L.A."/>
            <person name="Pepin K.H."/>
            <person name="Minx P."/>
            <person name="Wagner-McPherson C."/>
            <person name="Layman D."/>
            <person name="Wylie K."/>
            <person name="Sekhon M."/>
            <person name="Becker M.C."/>
            <person name="Fewell G.A."/>
            <person name="Delehaunty K.D."/>
            <person name="Miner T.L."/>
            <person name="Nash W.E."/>
            <person name="Kremitzki C."/>
            <person name="Oddy L."/>
            <person name="Du H."/>
            <person name="Sun H."/>
            <person name="Bradshaw-Cordum H."/>
            <person name="Ali J."/>
            <person name="Carter J."/>
            <person name="Cordes M."/>
            <person name="Harris A."/>
            <person name="Isak A."/>
            <person name="van Brunt A."/>
            <person name="Nguyen C."/>
            <person name="Du F."/>
            <person name="Courtney L."/>
            <person name="Kalicki J."/>
            <person name="Ozersky P."/>
            <person name="Abbott S."/>
            <person name="Armstrong J."/>
            <person name="Belter E.A."/>
            <person name="Caruso L."/>
            <person name="Cedroni M."/>
            <person name="Cotton M."/>
            <person name="Davidson T."/>
            <person name="Desai A."/>
            <person name="Elliott G."/>
            <person name="Erb T."/>
            <person name="Fronick C."/>
            <person name="Gaige T."/>
            <person name="Haakenson W."/>
            <person name="Haglund K."/>
            <person name="Holmes A."/>
            <person name="Harkins R."/>
            <person name="Kim K."/>
            <person name="Kruchowski S.S."/>
            <person name="Strong C.M."/>
            <person name="Grewal N."/>
            <person name="Goyea E."/>
            <person name="Hou S."/>
            <person name="Levy A."/>
            <person name="Martinka S."/>
            <person name="Mead K."/>
            <person name="McLellan M.D."/>
            <person name="Meyer R."/>
            <person name="Randall-Maher J."/>
            <person name="Tomlinson C."/>
            <person name="Dauphin-Kohlberg S."/>
            <person name="Kozlowicz-Reilly A."/>
            <person name="Shah N."/>
            <person name="Swearengen-Shahid S."/>
            <person name="Snider J."/>
            <person name="Strong J.T."/>
            <person name="Thompson J."/>
            <person name="Yoakum M."/>
            <person name="Leonard S."/>
            <person name="Pearman C."/>
            <person name="Trani L."/>
            <person name="Radionenko M."/>
            <person name="Waligorski J.E."/>
            <person name="Wang C."/>
            <person name="Rock S.M."/>
            <person name="Tin-Wollam A.-M."/>
            <person name="Maupin R."/>
            <person name="Latreille P."/>
            <person name="Wendl M.C."/>
            <person name="Yang S.-P."/>
            <person name="Pohl C."/>
            <person name="Wallis J.W."/>
            <person name="Spieth J."/>
            <person name="Bieri T.A."/>
            <person name="Berkowicz N."/>
            <person name="Nelson J.O."/>
            <person name="Osborne J."/>
            <person name="Ding L."/>
            <person name="Meyer R."/>
            <person name="Sabo A."/>
            <person name="Shotland Y."/>
            <person name="Sinha P."/>
            <person name="Wohldmann P.E."/>
            <person name="Cook L.L."/>
            <person name="Hickenbotham M.T."/>
            <person name="Eldred J."/>
            <person name="Williams D."/>
            <person name="Jones T.A."/>
            <person name="She X."/>
            <person name="Ciccarelli F.D."/>
            <person name="Izaurralde E."/>
            <person name="Taylor J."/>
            <person name="Schmutz J."/>
            <person name="Myers R.M."/>
            <person name="Cox D.R."/>
            <person name="Huang X."/>
            <person name="McPherson J.D."/>
            <person name="Mardis E.R."/>
            <person name="Clifton S.W."/>
            <person name="Warren W.C."/>
            <person name="Chinwalla A.T."/>
            <person name="Eddy S.R."/>
            <person name="Marra M.A."/>
            <person name="Ovcharenko I."/>
            <person name="Furey T.S."/>
            <person name="Miller W."/>
            <person name="Eichler E.E."/>
            <person name="Bork P."/>
            <person name="Suyama M."/>
            <person name="Torrents D."/>
            <person name="Waterston R.H."/>
            <person name="Wilson R.K."/>
        </authorList>
    </citation>
    <scope>NUCLEOTIDE SEQUENCE [LARGE SCALE GENOMIC DNA]</scope>
</reference>
<accession>A8MUA0</accession>
<dbReference type="EMBL" id="AC130709">
    <property type="status" value="NOT_ANNOTATED_CDS"/>
    <property type="molecule type" value="Genomic_DNA"/>
</dbReference>
<dbReference type="GlyGen" id="A8MUA0">
    <property type="glycosylation" value="1 site"/>
</dbReference>
<dbReference type="BioMuta" id="-"/>
<dbReference type="MassIVE" id="A8MUA0"/>
<dbReference type="neXtProt" id="NX_A8MUA0"/>
<dbReference type="InParanoid" id="A8MUA0"/>
<dbReference type="PAN-GO" id="A8MUA0">
    <property type="GO annotations" value="4 GO annotations based on evolutionary models"/>
</dbReference>
<dbReference type="PhylomeDB" id="A8MUA0"/>
<dbReference type="Pharos" id="A8MUA0">
    <property type="development level" value="Tdark"/>
</dbReference>
<dbReference type="Proteomes" id="UP000005640">
    <property type="component" value="Unplaced"/>
</dbReference>
<dbReference type="RNAct" id="A8MUA0">
    <property type="molecule type" value="protein"/>
</dbReference>
<dbReference type="InterPro" id="IPR043220">
    <property type="entry name" value="POM121-like_prot_1"/>
</dbReference>
<dbReference type="PANTHER" id="PTHR15566">
    <property type="entry name" value="POM121-LIKE"/>
    <property type="match status" value="1"/>
</dbReference>
<dbReference type="PANTHER" id="PTHR15566:SF7">
    <property type="entry name" value="UPF0607 PROTEIN ENSP00000332738-RELATED"/>
    <property type="match status" value="1"/>
</dbReference>
<dbReference type="Pfam" id="PF15229">
    <property type="entry name" value="POM121"/>
    <property type="match status" value="1"/>
</dbReference>
<name>YB057_HUMAN</name>
<evidence type="ECO:0000256" key="1">
    <source>
        <dbReference type="SAM" id="MobiDB-lite"/>
    </source>
</evidence>
<evidence type="ECO:0000305" key="2"/>
<keyword id="KW-1185">Reference proteome</keyword>
<protein>
    <recommendedName>
        <fullName>Putative UPF0607 protein ENSP00000381514</fullName>
    </recommendedName>
</protein>